<feature type="chain" id="PRO_0000130079" description="Small ribosomal subunit protein uS3">
    <location>
        <begin position="1"/>
        <end position="263"/>
    </location>
</feature>
<feature type="domain" description="KH type-2" evidence="1">
    <location>
        <begin position="39"/>
        <end position="107"/>
    </location>
</feature>
<feature type="region of interest" description="Disordered" evidence="2">
    <location>
        <begin position="211"/>
        <end position="263"/>
    </location>
</feature>
<feature type="compositionally biased region" description="Basic and acidic residues" evidence="2">
    <location>
        <begin position="219"/>
        <end position="240"/>
    </location>
</feature>
<sequence>MGQKIHPTGFRLAVTRNWTSRWFADDKAFGTMLAEDIRVREYLKKKLKSASVGRVIIERPAKNARITVYSARPGVVIGKRGEDIENLKADLQRLMGVPVHVNIEEIRKPETDAQLIADSISQQLEKRIMFRRAMKRAMQNAMRLGAQGIKIMSSGRLNGIEIARTEWYREGRVPLHTLKANIDYGTSEAHTTYGVIGIKVWVYKGDMLANGELPPEAATPREEERRPRRAPRGDRPDGARTGRPGGRGRGPRKADAAPAPEGE</sequence>
<proteinExistence type="inferred from homology"/>
<dbReference type="EMBL" id="BX640437">
    <property type="protein sequence ID" value="CAE30537.1"/>
    <property type="molecule type" value="Genomic_DNA"/>
</dbReference>
<dbReference type="RefSeq" id="WP_003806910.1">
    <property type="nucleotide sequence ID" value="NC_002927.3"/>
</dbReference>
<dbReference type="SMR" id="Q7WRB9"/>
<dbReference type="GeneID" id="93206264"/>
<dbReference type="KEGG" id="bbr:BB0035"/>
<dbReference type="eggNOG" id="COG0092">
    <property type="taxonomic scope" value="Bacteria"/>
</dbReference>
<dbReference type="HOGENOM" id="CLU_058591_0_2_4"/>
<dbReference type="Proteomes" id="UP000001027">
    <property type="component" value="Chromosome"/>
</dbReference>
<dbReference type="GO" id="GO:0022627">
    <property type="term" value="C:cytosolic small ribosomal subunit"/>
    <property type="evidence" value="ECO:0007669"/>
    <property type="project" value="TreeGrafter"/>
</dbReference>
<dbReference type="GO" id="GO:0003729">
    <property type="term" value="F:mRNA binding"/>
    <property type="evidence" value="ECO:0007669"/>
    <property type="project" value="UniProtKB-UniRule"/>
</dbReference>
<dbReference type="GO" id="GO:0019843">
    <property type="term" value="F:rRNA binding"/>
    <property type="evidence" value="ECO:0007669"/>
    <property type="project" value="UniProtKB-UniRule"/>
</dbReference>
<dbReference type="GO" id="GO:0003735">
    <property type="term" value="F:structural constituent of ribosome"/>
    <property type="evidence" value="ECO:0007669"/>
    <property type="project" value="InterPro"/>
</dbReference>
<dbReference type="GO" id="GO:0006412">
    <property type="term" value="P:translation"/>
    <property type="evidence" value="ECO:0007669"/>
    <property type="project" value="UniProtKB-UniRule"/>
</dbReference>
<dbReference type="CDD" id="cd02412">
    <property type="entry name" value="KH-II_30S_S3"/>
    <property type="match status" value="1"/>
</dbReference>
<dbReference type="FunFam" id="3.30.1140.32:FF:000006">
    <property type="entry name" value="30S ribosomal protein S3"/>
    <property type="match status" value="1"/>
</dbReference>
<dbReference type="FunFam" id="3.30.300.20:FF:000001">
    <property type="entry name" value="30S ribosomal protein S3"/>
    <property type="match status" value="1"/>
</dbReference>
<dbReference type="Gene3D" id="3.30.300.20">
    <property type="match status" value="1"/>
</dbReference>
<dbReference type="Gene3D" id="3.30.1140.32">
    <property type="entry name" value="Ribosomal protein S3, C-terminal domain"/>
    <property type="match status" value="1"/>
</dbReference>
<dbReference type="HAMAP" id="MF_01309_B">
    <property type="entry name" value="Ribosomal_uS3_B"/>
    <property type="match status" value="1"/>
</dbReference>
<dbReference type="InterPro" id="IPR004087">
    <property type="entry name" value="KH_dom"/>
</dbReference>
<dbReference type="InterPro" id="IPR015946">
    <property type="entry name" value="KH_dom-like_a/b"/>
</dbReference>
<dbReference type="InterPro" id="IPR004044">
    <property type="entry name" value="KH_dom_type_2"/>
</dbReference>
<dbReference type="InterPro" id="IPR009019">
    <property type="entry name" value="KH_sf_prok-type"/>
</dbReference>
<dbReference type="InterPro" id="IPR036419">
    <property type="entry name" value="Ribosomal_S3_C_sf"/>
</dbReference>
<dbReference type="InterPro" id="IPR005704">
    <property type="entry name" value="Ribosomal_uS3_bac-typ"/>
</dbReference>
<dbReference type="InterPro" id="IPR001351">
    <property type="entry name" value="Ribosomal_uS3_C"/>
</dbReference>
<dbReference type="InterPro" id="IPR018280">
    <property type="entry name" value="Ribosomal_uS3_CS"/>
</dbReference>
<dbReference type="NCBIfam" id="TIGR01009">
    <property type="entry name" value="rpsC_bact"/>
    <property type="match status" value="1"/>
</dbReference>
<dbReference type="PANTHER" id="PTHR11760">
    <property type="entry name" value="30S/40S RIBOSOMAL PROTEIN S3"/>
    <property type="match status" value="1"/>
</dbReference>
<dbReference type="PANTHER" id="PTHR11760:SF19">
    <property type="entry name" value="SMALL RIBOSOMAL SUBUNIT PROTEIN US3C"/>
    <property type="match status" value="1"/>
</dbReference>
<dbReference type="Pfam" id="PF07650">
    <property type="entry name" value="KH_2"/>
    <property type="match status" value="1"/>
</dbReference>
<dbReference type="Pfam" id="PF00189">
    <property type="entry name" value="Ribosomal_S3_C"/>
    <property type="match status" value="1"/>
</dbReference>
<dbReference type="SMART" id="SM00322">
    <property type="entry name" value="KH"/>
    <property type="match status" value="1"/>
</dbReference>
<dbReference type="SUPFAM" id="SSF54814">
    <property type="entry name" value="Prokaryotic type KH domain (KH-domain type II)"/>
    <property type="match status" value="1"/>
</dbReference>
<dbReference type="SUPFAM" id="SSF54821">
    <property type="entry name" value="Ribosomal protein S3 C-terminal domain"/>
    <property type="match status" value="1"/>
</dbReference>
<dbReference type="PROSITE" id="PS50823">
    <property type="entry name" value="KH_TYPE_2"/>
    <property type="match status" value="1"/>
</dbReference>
<dbReference type="PROSITE" id="PS00548">
    <property type="entry name" value="RIBOSOMAL_S3"/>
    <property type="match status" value="1"/>
</dbReference>
<evidence type="ECO:0000255" key="1">
    <source>
        <dbReference type="HAMAP-Rule" id="MF_01309"/>
    </source>
</evidence>
<evidence type="ECO:0000256" key="2">
    <source>
        <dbReference type="SAM" id="MobiDB-lite"/>
    </source>
</evidence>
<evidence type="ECO:0000305" key="3"/>
<comment type="function">
    <text evidence="1">Binds the lower part of the 30S subunit head. Binds mRNA in the 70S ribosome, positioning it for translation.</text>
</comment>
<comment type="subunit">
    <text evidence="1">Part of the 30S ribosomal subunit. Forms a tight complex with proteins S10 and S14.</text>
</comment>
<comment type="similarity">
    <text evidence="1">Belongs to the universal ribosomal protein uS3 family.</text>
</comment>
<organism>
    <name type="scientific">Bordetella bronchiseptica (strain ATCC BAA-588 / NCTC 13252 / RB50)</name>
    <name type="common">Alcaligenes bronchisepticus</name>
    <dbReference type="NCBI Taxonomy" id="257310"/>
    <lineage>
        <taxon>Bacteria</taxon>
        <taxon>Pseudomonadati</taxon>
        <taxon>Pseudomonadota</taxon>
        <taxon>Betaproteobacteria</taxon>
        <taxon>Burkholderiales</taxon>
        <taxon>Alcaligenaceae</taxon>
        <taxon>Bordetella</taxon>
    </lineage>
</organism>
<protein>
    <recommendedName>
        <fullName evidence="1">Small ribosomal subunit protein uS3</fullName>
    </recommendedName>
    <alternativeName>
        <fullName evidence="3">30S ribosomal protein S3</fullName>
    </alternativeName>
</protein>
<name>RS3_BORBR</name>
<gene>
    <name evidence="1" type="primary">rpsC</name>
    <name type="ordered locus">BB0035</name>
</gene>
<reference key="1">
    <citation type="journal article" date="2003" name="Nat. Genet.">
        <title>Comparative analysis of the genome sequences of Bordetella pertussis, Bordetella parapertussis and Bordetella bronchiseptica.</title>
        <authorList>
            <person name="Parkhill J."/>
            <person name="Sebaihia M."/>
            <person name="Preston A."/>
            <person name="Murphy L.D."/>
            <person name="Thomson N.R."/>
            <person name="Harris D.E."/>
            <person name="Holden M.T.G."/>
            <person name="Churcher C.M."/>
            <person name="Bentley S.D."/>
            <person name="Mungall K.L."/>
            <person name="Cerdeno-Tarraga A.-M."/>
            <person name="Temple L."/>
            <person name="James K.D."/>
            <person name="Harris B."/>
            <person name="Quail M.A."/>
            <person name="Achtman M."/>
            <person name="Atkin R."/>
            <person name="Baker S."/>
            <person name="Basham D."/>
            <person name="Bason N."/>
            <person name="Cherevach I."/>
            <person name="Chillingworth T."/>
            <person name="Collins M."/>
            <person name="Cronin A."/>
            <person name="Davis P."/>
            <person name="Doggett J."/>
            <person name="Feltwell T."/>
            <person name="Goble A."/>
            <person name="Hamlin N."/>
            <person name="Hauser H."/>
            <person name="Holroyd S."/>
            <person name="Jagels K."/>
            <person name="Leather S."/>
            <person name="Moule S."/>
            <person name="Norberczak H."/>
            <person name="O'Neil S."/>
            <person name="Ormond D."/>
            <person name="Price C."/>
            <person name="Rabbinowitsch E."/>
            <person name="Rutter S."/>
            <person name="Sanders M."/>
            <person name="Saunders D."/>
            <person name="Seeger K."/>
            <person name="Sharp S."/>
            <person name="Simmonds M."/>
            <person name="Skelton J."/>
            <person name="Squares R."/>
            <person name="Squares S."/>
            <person name="Stevens K."/>
            <person name="Unwin L."/>
            <person name="Whitehead S."/>
            <person name="Barrell B.G."/>
            <person name="Maskell D.J."/>
        </authorList>
    </citation>
    <scope>NUCLEOTIDE SEQUENCE [LARGE SCALE GENOMIC DNA]</scope>
    <source>
        <strain>ATCC BAA-588 / NCTC 13252 / RB50</strain>
    </source>
</reference>
<keyword id="KW-0687">Ribonucleoprotein</keyword>
<keyword id="KW-0689">Ribosomal protein</keyword>
<keyword id="KW-0694">RNA-binding</keyword>
<keyword id="KW-0699">rRNA-binding</keyword>
<accession>Q7WRB9</accession>